<organism>
    <name type="scientific">Maize chlorotic mottle virus (isolate United States/Kansas/1987)</name>
    <name type="common">MCMV</name>
    <dbReference type="NCBI Taxonomy" id="882210"/>
    <lineage>
        <taxon>Viruses</taxon>
        <taxon>Riboviria</taxon>
        <taxon>Orthornavirae</taxon>
        <taxon>Kitrinoviricota</taxon>
        <taxon>Tolucaviricetes</taxon>
        <taxon>Tolivirales</taxon>
        <taxon>Tombusviridae</taxon>
        <taxon>Procedovirinae</taxon>
        <taxon>Machlomovirus</taxon>
        <taxon>Machlomovirus zeae</taxon>
    </lineage>
</organism>
<organismHost>
    <name type="scientific">Zea mays</name>
    <name type="common">Maize</name>
    <dbReference type="NCBI Taxonomy" id="4577"/>
</organismHost>
<proteinExistence type="inferred from homology"/>
<protein>
    <recommendedName>
        <fullName evidence="4">p7b</fullName>
    </recommendedName>
</protein>
<evidence type="ECO:0000250" key="1">
    <source>
        <dbReference type="UniProtKB" id="Q89846"/>
    </source>
</evidence>
<evidence type="ECO:0000255" key="2"/>
<evidence type="ECO:0000269" key="3">
    <source>
    </source>
</evidence>
<evidence type="ECO:0000303" key="4">
    <source>
    </source>
</evidence>
<evidence type="ECO:0000305" key="5"/>
<name>MP2_MCMVK</name>
<comment type="function">
    <text evidence="3">Required for cell-to-cell movement of virions in the host plant together with p7a.</text>
</comment>
<comment type="subcellular location">
    <subcellularLocation>
        <location evidence="1">Host endoplasmic reticulum membrane</location>
        <topology evidence="1">Single-pass type II membrane protein</topology>
    </subcellularLocation>
</comment>
<comment type="similarity">
    <text evidence="5">Belongs to the gammacarmovirus double gene block protein 2 family.</text>
</comment>
<comment type="caution">
    <text evidence="5">This sequence initiates at a non-canonical CTG leucine codon.</text>
</comment>
<keyword id="KW-1038">Host endoplasmic reticulum</keyword>
<keyword id="KW-1043">Host membrane</keyword>
<keyword id="KW-0472">Membrane</keyword>
<keyword id="KW-1185">Reference proteome</keyword>
<keyword id="KW-0735">Signal-anchor</keyword>
<keyword id="KW-0812">Transmembrane</keyword>
<keyword id="KW-1133">Transmembrane helix</keyword>
<keyword id="KW-0813">Transport</keyword>
<keyword id="KW-0916">Viral movement protein</keyword>
<reference key="1">
    <citation type="journal article" date="1989" name="Nucleic Acids Res.">
        <title>The complete nucleotide sequence of the maize chlorotic mottle virus genome.</title>
        <authorList>
            <person name="Nutter R.C."/>
            <person name="Scheets K."/>
            <person name="Panganiban L.C."/>
            <person name="Lommel S.A."/>
        </authorList>
    </citation>
    <scope>NUCLEOTIDE SEQUENCE [GENOMIC RNA]</scope>
    <source>
        <strain>Isolate United States/Kansas/1987</strain>
    </source>
</reference>
<reference key="2">
    <citation type="journal article" date="1990" name="J. Gen. Virol.">
        <title>Nucleotide sequence and genomic organization of melon necrotic spot virus.</title>
        <authorList>
            <person name="Riviere C.J."/>
            <person name="Rochon D.M."/>
        </authorList>
    </citation>
    <scope>IDENTIFICATION</scope>
</reference>
<reference key="3">
    <citation type="journal article" date="2016" name="Virus Res.">
        <title>Analysis of gene functions in Maize chlorotic mottle virus.</title>
        <authorList>
            <person name="Scheets K."/>
        </authorList>
    </citation>
    <scope>FUNCTION</scope>
</reference>
<dbReference type="EMBL" id="X14736">
    <property type="protein sequence ID" value="CZQ76687.1"/>
    <property type="molecule type" value="Genomic_RNA"/>
</dbReference>
<dbReference type="RefSeq" id="YP_009237216.1">
    <property type="nucleotide sequence ID" value="NC_003627.1"/>
</dbReference>
<dbReference type="SMR" id="A0A131KVX9"/>
<dbReference type="Proteomes" id="UP000007071">
    <property type="component" value="Segment"/>
</dbReference>
<dbReference type="GO" id="GO:0044167">
    <property type="term" value="C:host cell endoplasmic reticulum membrane"/>
    <property type="evidence" value="ECO:0007669"/>
    <property type="project" value="UniProtKB-SubCell"/>
</dbReference>
<dbReference type="GO" id="GO:0016020">
    <property type="term" value="C:membrane"/>
    <property type="evidence" value="ECO:0007669"/>
    <property type="project" value="UniProtKB-KW"/>
</dbReference>
<dbReference type="GO" id="GO:0046740">
    <property type="term" value="P:transport of virus in host, cell to cell"/>
    <property type="evidence" value="ECO:0007669"/>
    <property type="project" value="UniProtKB-KW"/>
</dbReference>
<feature type="chain" id="PRO_0000455297" description="p7b">
    <location>
        <begin position="1"/>
        <end position="64"/>
    </location>
</feature>
<feature type="topological domain" description="Cytoplasmic" evidence="1">
    <location>
        <begin position="1"/>
        <end position="12"/>
    </location>
</feature>
<feature type="transmembrane region" description="Helical; Signal-anchor for type II membrane protein" evidence="2">
    <location>
        <begin position="13"/>
        <end position="30"/>
    </location>
</feature>
<feature type="topological domain" description="Lumenal" evidence="1">
    <location>
        <begin position="31"/>
        <end position="64"/>
    </location>
</feature>
<sequence length="64" mass="7322">MECVCVDSSWPQWLRNLILGILISSILFILTKTQDTVAVYHEPSVYSIDQTQKFQKIDIHNGGK</sequence>
<gene>
    <name evidence="5" type="ORF">ORF4</name>
</gene>
<accession>A0A131KVX9</accession>